<proteinExistence type="inferred from homology"/>
<feature type="chain" id="PRO_0000360021" description="Nucleoside-triphosphatase THEP1">
    <location>
        <begin position="1"/>
        <end position="187"/>
    </location>
</feature>
<feature type="binding site" evidence="1">
    <location>
        <begin position="9"/>
        <end position="16"/>
    </location>
    <ligand>
        <name>ATP</name>
        <dbReference type="ChEBI" id="CHEBI:30616"/>
    </ligand>
</feature>
<feature type="binding site" evidence="1">
    <location>
        <begin position="100"/>
        <end position="107"/>
    </location>
    <ligand>
        <name>ATP</name>
        <dbReference type="ChEBI" id="CHEBI:30616"/>
    </ligand>
</feature>
<sequence>MHSYVVVTGRPGVGKTTLFWKVVRKLMDEGVVVKGFYCPEVRGQQGYRIGFKIVLLDGSGEAWLARREGCNGPRVGRYYTCPEAETIASRVLGELGKADLIAIDEIGPMELRLAGVRRTIYRVLDSGKPGLFVVHERLSDPYILARLKPSGVWFHVTIENRDVLPEKVYEAVKQAVARSKGVGELSL</sequence>
<dbReference type="EC" id="3.6.1.15" evidence="1"/>
<dbReference type="EMBL" id="CP000493">
    <property type="protein sequence ID" value="ABM80747.1"/>
    <property type="molecule type" value="Genomic_DNA"/>
</dbReference>
<dbReference type="RefSeq" id="WP_011822065.1">
    <property type="nucleotide sequence ID" value="NC_008818.1"/>
</dbReference>
<dbReference type="SMR" id="A2BL86"/>
<dbReference type="STRING" id="415426.Hbut_0898"/>
<dbReference type="EnsemblBacteria" id="ABM80747">
    <property type="protein sequence ID" value="ABM80747"/>
    <property type="gene ID" value="Hbut_0898"/>
</dbReference>
<dbReference type="GeneID" id="4782722"/>
<dbReference type="KEGG" id="hbu:Hbut_0898"/>
<dbReference type="eggNOG" id="arCOG01034">
    <property type="taxonomic scope" value="Archaea"/>
</dbReference>
<dbReference type="HOGENOM" id="CLU_103145_1_1_2"/>
<dbReference type="OrthoDB" id="52698at2157"/>
<dbReference type="Proteomes" id="UP000002593">
    <property type="component" value="Chromosome"/>
</dbReference>
<dbReference type="GO" id="GO:0005524">
    <property type="term" value="F:ATP binding"/>
    <property type="evidence" value="ECO:0007669"/>
    <property type="project" value="UniProtKB-UniRule"/>
</dbReference>
<dbReference type="GO" id="GO:0017111">
    <property type="term" value="F:ribonucleoside triphosphate phosphatase activity"/>
    <property type="evidence" value="ECO:0007669"/>
    <property type="project" value="UniProtKB-UniRule"/>
</dbReference>
<dbReference type="CDD" id="cd19482">
    <property type="entry name" value="RecA-like_Thep1"/>
    <property type="match status" value="1"/>
</dbReference>
<dbReference type="Gene3D" id="3.40.50.300">
    <property type="entry name" value="P-loop containing nucleotide triphosphate hydrolases"/>
    <property type="match status" value="1"/>
</dbReference>
<dbReference type="HAMAP" id="MF_00796">
    <property type="entry name" value="NTPase_1"/>
    <property type="match status" value="1"/>
</dbReference>
<dbReference type="InterPro" id="IPR004948">
    <property type="entry name" value="Nuc-triphosphatase_THEP1"/>
</dbReference>
<dbReference type="InterPro" id="IPR027417">
    <property type="entry name" value="P-loop_NTPase"/>
</dbReference>
<dbReference type="PANTHER" id="PTHR43146">
    <property type="entry name" value="CANCER-RELATED NUCLEOSIDE-TRIPHOSPHATASE"/>
    <property type="match status" value="1"/>
</dbReference>
<dbReference type="PANTHER" id="PTHR43146:SF1">
    <property type="entry name" value="CANCER-RELATED NUCLEOSIDE-TRIPHOSPHATASE"/>
    <property type="match status" value="1"/>
</dbReference>
<dbReference type="Pfam" id="PF03266">
    <property type="entry name" value="NTPase_1"/>
    <property type="match status" value="1"/>
</dbReference>
<dbReference type="SUPFAM" id="SSF52540">
    <property type="entry name" value="P-loop containing nucleoside triphosphate hydrolases"/>
    <property type="match status" value="1"/>
</dbReference>
<keyword id="KW-0067">ATP-binding</keyword>
<keyword id="KW-0378">Hydrolase</keyword>
<keyword id="KW-0547">Nucleotide-binding</keyword>
<keyword id="KW-1185">Reference proteome</keyword>
<accession>A2BL86</accession>
<protein>
    <recommendedName>
        <fullName evidence="1">Nucleoside-triphosphatase THEP1</fullName>
        <shortName evidence="1">NTPase THEP1</shortName>
        <ecNumber evidence="1">3.6.1.15</ecNumber>
    </recommendedName>
    <alternativeName>
        <fullName evidence="1">Nucleoside triphosphate phosphohydrolase</fullName>
    </alternativeName>
</protein>
<comment type="function">
    <text evidence="1">Has nucleotide phosphatase activity towards ATP, GTP, CTP, TTP and UTP. May hydrolyze nucleoside diphosphates with lower efficiency.</text>
</comment>
<comment type="catalytic activity">
    <reaction evidence="1">
        <text>a ribonucleoside 5'-triphosphate + H2O = a ribonucleoside 5'-diphosphate + phosphate + H(+)</text>
        <dbReference type="Rhea" id="RHEA:23680"/>
        <dbReference type="ChEBI" id="CHEBI:15377"/>
        <dbReference type="ChEBI" id="CHEBI:15378"/>
        <dbReference type="ChEBI" id="CHEBI:43474"/>
        <dbReference type="ChEBI" id="CHEBI:57930"/>
        <dbReference type="ChEBI" id="CHEBI:61557"/>
        <dbReference type="EC" id="3.6.1.15"/>
    </reaction>
</comment>
<comment type="similarity">
    <text evidence="1">Belongs to the THEP1 NTPase family.</text>
</comment>
<name>NTPTH_HYPBU</name>
<organism>
    <name type="scientific">Hyperthermus butylicus (strain DSM 5456 / JCM 9403 / PLM1-5)</name>
    <dbReference type="NCBI Taxonomy" id="415426"/>
    <lineage>
        <taxon>Archaea</taxon>
        <taxon>Thermoproteota</taxon>
        <taxon>Thermoprotei</taxon>
        <taxon>Desulfurococcales</taxon>
        <taxon>Pyrodictiaceae</taxon>
        <taxon>Hyperthermus</taxon>
    </lineage>
</organism>
<evidence type="ECO:0000255" key="1">
    <source>
        <dbReference type="HAMAP-Rule" id="MF_00796"/>
    </source>
</evidence>
<reference key="1">
    <citation type="journal article" date="2007" name="Archaea">
        <title>The genome of Hyperthermus butylicus: a sulfur-reducing, peptide fermenting, neutrophilic Crenarchaeote growing up to 108 degrees C.</title>
        <authorList>
            <person name="Bruegger K."/>
            <person name="Chen L."/>
            <person name="Stark M."/>
            <person name="Zibat A."/>
            <person name="Redder P."/>
            <person name="Ruepp A."/>
            <person name="Awayez M."/>
            <person name="She Q."/>
            <person name="Garrett R.A."/>
            <person name="Klenk H.-P."/>
        </authorList>
    </citation>
    <scope>NUCLEOTIDE SEQUENCE [LARGE SCALE GENOMIC DNA]</scope>
    <source>
        <strain>DSM 5456 / JCM 9403 / PLM1-5</strain>
    </source>
</reference>
<gene>
    <name type="ordered locus">Hbut_0898</name>
</gene>